<comment type="function">
    <text evidence="1">Acts as a chaperone.</text>
</comment>
<comment type="induction">
    <text evidence="1">By stress conditions e.g. heat shock (By similarity).</text>
</comment>
<comment type="similarity">
    <text evidence="3">Belongs to the heat shock protein 70 family.</text>
</comment>
<feature type="chain" id="PRO_0000078507" description="Chaperone protein DnaK">
    <location>
        <begin position="1"/>
        <end position="634"/>
    </location>
</feature>
<feature type="region of interest" description="Disordered" evidence="2">
    <location>
        <begin position="599"/>
        <end position="634"/>
    </location>
</feature>
<feature type="compositionally biased region" description="Low complexity" evidence="2">
    <location>
        <begin position="600"/>
        <end position="614"/>
    </location>
</feature>
<feature type="modified residue" description="Phosphothreonine; by autocatalysis" evidence="1">
    <location>
        <position position="199"/>
    </location>
</feature>
<sequence>MGKIIGIDLGTTNSCVAVMDGDKPRVIENAEGDRTTPSIIAYTQDNETLVGQPAKRQAVTNPKNTLFAIKRLIGRRFQDEEVQRDVSIMPFEIVAADNGDAWVGVKGEKMAPPQISAEVLKKMKKTAEDFLGEPVTEAVITVPAYFNDAQRQATKDAGRIAGLEVKRIINEPTAAALAYGLDKGQGNKTIAVYDLGGGTFDLSIIEIDEVGGEKTFEVLSTNGDTHLGGEDFDNRVINYLVDEFKKEQGVDLRNDPLAMQRLKEAGEKAKIELSSAQQTDVNLPYITADATGPKHLNIKLTRAKLESLVEDLVSRSLEPVKIALADAGLSVSQIDDVILVGGQTRMPLVQQKVEAFFGKAPRKDVNPDEAVAIGAAVQGGVLAGDVKDVLLLDVTPLSLGIETMGGVMTTLIEKNTTIPTKKSQVFSTAEDNQSAVTIHVLQGERKRAADNKSLGQFNLEGINPAPRGMPQIEVTFDIDADGIIHVSAKDKGTNKEQKITIKASSGLTDEEIQQMVRDAEANAEADRKFEELVQARNQADHLVHGTRKQLSEVGDKLSAEDKAPIEKAVADLEAAAKGEDKAEIETKVQALIQVSEKLMQAAQPQPEAQAQQAQSGKSNDDVVDAEFEEVKDNK</sequence>
<name>DNAK_PASMU</name>
<reference key="1">
    <citation type="journal article" date="2001" name="Proc. Natl. Acad. Sci. U.S.A.">
        <title>Complete genomic sequence of Pasteurella multocida Pm70.</title>
        <authorList>
            <person name="May B.J."/>
            <person name="Zhang Q."/>
            <person name="Li L.L."/>
            <person name="Paustian M.L."/>
            <person name="Whittam T.S."/>
            <person name="Kapur V."/>
        </authorList>
    </citation>
    <scope>NUCLEOTIDE SEQUENCE [LARGE SCALE GENOMIC DNA]</scope>
    <source>
        <strain>Pm70</strain>
    </source>
</reference>
<evidence type="ECO:0000250" key="1"/>
<evidence type="ECO:0000256" key="2">
    <source>
        <dbReference type="SAM" id="MobiDB-lite"/>
    </source>
</evidence>
<evidence type="ECO:0000305" key="3"/>
<keyword id="KW-0067">ATP-binding</keyword>
<keyword id="KW-0143">Chaperone</keyword>
<keyword id="KW-0547">Nucleotide-binding</keyword>
<keyword id="KW-0597">Phosphoprotein</keyword>
<keyword id="KW-1185">Reference proteome</keyword>
<keyword id="KW-0346">Stress response</keyword>
<proteinExistence type="inferred from homology"/>
<organism>
    <name type="scientific">Pasteurella multocida (strain Pm70)</name>
    <dbReference type="NCBI Taxonomy" id="272843"/>
    <lineage>
        <taxon>Bacteria</taxon>
        <taxon>Pseudomonadati</taxon>
        <taxon>Pseudomonadota</taxon>
        <taxon>Gammaproteobacteria</taxon>
        <taxon>Pasteurellales</taxon>
        <taxon>Pasteurellaceae</taxon>
        <taxon>Pasteurella</taxon>
    </lineage>
</organism>
<dbReference type="EMBL" id="AE004439">
    <property type="protein sequence ID" value="AAK02820.1"/>
    <property type="molecule type" value="Genomic_DNA"/>
</dbReference>
<dbReference type="RefSeq" id="WP_010906826.1">
    <property type="nucleotide sequence ID" value="NC_002663.1"/>
</dbReference>
<dbReference type="SMR" id="P57870"/>
<dbReference type="STRING" id="272843.PM0736"/>
<dbReference type="EnsemblBacteria" id="AAK02820">
    <property type="protein sequence ID" value="AAK02820"/>
    <property type="gene ID" value="PM0736"/>
</dbReference>
<dbReference type="KEGG" id="pmu:PM0736"/>
<dbReference type="PATRIC" id="fig|272843.6.peg.744"/>
<dbReference type="HOGENOM" id="CLU_005965_2_1_6"/>
<dbReference type="OrthoDB" id="9766019at2"/>
<dbReference type="Proteomes" id="UP000000809">
    <property type="component" value="Chromosome"/>
</dbReference>
<dbReference type="GO" id="GO:0005524">
    <property type="term" value="F:ATP binding"/>
    <property type="evidence" value="ECO:0007669"/>
    <property type="project" value="UniProtKB-UniRule"/>
</dbReference>
<dbReference type="GO" id="GO:0140662">
    <property type="term" value="F:ATP-dependent protein folding chaperone"/>
    <property type="evidence" value="ECO:0007669"/>
    <property type="project" value="InterPro"/>
</dbReference>
<dbReference type="GO" id="GO:0051082">
    <property type="term" value="F:unfolded protein binding"/>
    <property type="evidence" value="ECO:0007669"/>
    <property type="project" value="InterPro"/>
</dbReference>
<dbReference type="CDD" id="cd10234">
    <property type="entry name" value="ASKHA_NBD_HSP70_DnaK-like"/>
    <property type="match status" value="1"/>
</dbReference>
<dbReference type="FunFam" id="2.60.34.10:FF:000014">
    <property type="entry name" value="Chaperone protein DnaK HSP70"/>
    <property type="match status" value="1"/>
</dbReference>
<dbReference type="FunFam" id="3.30.30.30:FF:000003">
    <property type="entry name" value="Heat shock protein 9"/>
    <property type="match status" value="1"/>
</dbReference>
<dbReference type="FunFam" id="1.20.1270.10:FF:000001">
    <property type="entry name" value="Molecular chaperone DnaK"/>
    <property type="match status" value="1"/>
</dbReference>
<dbReference type="FunFam" id="3.30.420.40:FF:000004">
    <property type="entry name" value="Molecular chaperone DnaK"/>
    <property type="match status" value="1"/>
</dbReference>
<dbReference type="FunFam" id="3.90.640.10:FF:000003">
    <property type="entry name" value="Molecular chaperone DnaK"/>
    <property type="match status" value="1"/>
</dbReference>
<dbReference type="Gene3D" id="1.20.1270.10">
    <property type="match status" value="1"/>
</dbReference>
<dbReference type="Gene3D" id="3.30.420.40">
    <property type="match status" value="2"/>
</dbReference>
<dbReference type="Gene3D" id="3.90.640.10">
    <property type="entry name" value="Actin, Chain A, domain 4"/>
    <property type="match status" value="1"/>
</dbReference>
<dbReference type="Gene3D" id="2.60.34.10">
    <property type="entry name" value="Substrate Binding Domain Of DNAk, Chain A, domain 1"/>
    <property type="match status" value="1"/>
</dbReference>
<dbReference type="HAMAP" id="MF_00332">
    <property type="entry name" value="DnaK"/>
    <property type="match status" value="1"/>
</dbReference>
<dbReference type="InterPro" id="IPR043129">
    <property type="entry name" value="ATPase_NBD"/>
</dbReference>
<dbReference type="InterPro" id="IPR012725">
    <property type="entry name" value="Chaperone_DnaK"/>
</dbReference>
<dbReference type="InterPro" id="IPR018181">
    <property type="entry name" value="Heat_shock_70_CS"/>
</dbReference>
<dbReference type="InterPro" id="IPR029048">
    <property type="entry name" value="HSP70_C_sf"/>
</dbReference>
<dbReference type="InterPro" id="IPR029047">
    <property type="entry name" value="HSP70_peptide-bd_sf"/>
</dbReference>
<dbReference type="InterPro" id="IPR013126">
    <property type="entry name" value="Hsp_70_fam"/>
</dbReference>
<dbReference type="NCBIfam" id="NF001413">
    <property type="entry name" value="PRK00290.1"/>
    <property type="match status" value="1"/>
</dbReference>
<dbReference type="NCBIfam" id="NF003520">
    <property type="entry name" value="PRK05183.1"/>
    <property type="match status" value="1"/>
</dbReference>
<dbReference type="NCBIfam" id="TIGR02350">
    <property type="entry name" value="prok_dnaK"/>
    <property type="match status" value="1"/>
</dbReference>
<dbReference type="PANTHER" id="PTHR19375">
    <property type="entry name" value="HEAT SHOCK PROTEIN 70KDA"/>
    <property type="match status" value="1"/>
</dbReference>
<dbReference type="Pfam" id="PF00012">
    <property type="entry name" value="HSP70"/>
    <property type="match status" value="1"/>
</dbReference>
<dbReference type="PRINTS" id="PR00301">
    <property type="entry name" value="HEATSHOCK70"/>
</dbReference>
<dbReference type="SUPFAM" id="SSF53067">
    <property type="entry name" value="Actin-like ATPase domain"/>
    <property type="match status" value="2"/>
</dbReference>
<dbReference type="SUPFAM" id="SSF100934">
    <property type="entry name" value="Heat shock protein 70kD (HSP70), C-terminal subdomain"/>
    <property type="match status" value="1"/>
</dbReference>
<dbReference type="SUPFAM" id="SSF100920">
    <property type="entry name" value="Heat shock protein 70kD (HSP70), peptide-binding domain"/>
    <property type="match status" value="1"/>
</dbReference>
<dbReference type="PROSITE" id="PS00297">
    <property type="entry name" value="HSP70_1"/>
    <property type="match status" value="1"/>
</dbReference>
<dbReference type="PROSITE" id="PS00329">
    <property type="entry name" value="HSP70_2"/>
    <property type="match status" value="1"/>
</dbReference>
<dbReference type="PROSITE" id="PS01036">
    <property type="entry name" value="HSP70_3"/>
    <property type="match status" value="1"/>
</dbReference>
<gene>
    <name type="primary">dnaK</name>
    <name type="ordered locus">PM0736</name>
</gene>
<accession>P57870</accession>
<protein>
    <recommendedName>
        <fullName>Chaperone protein DnaK</fullName>
    </recommendedName>
    <alternativeName>
        <fullName>HSP70</fullName>
    </alternativeName>
    <alternativeName>
        <fullName>Heat shock 70 kDa protein</fullName>
    </alternativeName>
    <alternativeName>
        <fullName>Heat shock protein 70</fullName>
    </alternativeName>
</protein>